<comment type="function">
    <text evidence="1">NDH-1 shuttles electrons from NADH, via FMN and iron-sulfur (Fe-S) centers, to quinones in the respiratory chain. Couples the redox reaction to proton translocation (for every two electrons transferred, four hydrogen ions are translocated across the cytoplasmic membrane), and thus conserves the redox energy in a proton gradient (By similarity).</text>
</comment>
<comment type="catalytic activity">
    <reaction evidence="2">
        <text>a quinone + NADH + 5 H(+)(in) = a quinol + NAD(+) + 4 H(+)(out)</text>
        <dbReference type="Rhea" id="RHEA:57888"/>
        <dbReference type="ChEBI" id="CHEBI:15378"/>
        <dbReference type="ChEBI" id="CHEBI:24646"/>
        <dbReference type="ChEBI" id="CHEBI:57540"/>
        <dbReference type="ChEBI" id="CHEBI:57945"/>
        <dbReference type="ChEBI" id="CHEBI:132124"/>
    </reaction>
</comment>
<comment type="cofactor">
    <cofactor evidence="2">
        <name>[4Fe-4S] cluster</name>
        <dbReference type="ChEBI" id="CHEBI:49883"/>
    </cofactor>
    <text evidence="2">Binds 1 [4Fe-4S] cluster.</text>
</comment>
<comment type="subunit">
    <text evidence="2">NDH-1 is composed of 14 different subunits. Subunits NuoB, C, D, E, F, and G constitute the peripheral sector of the complex.</text>
</comment>
<comment type="subcellular location">
    <subcellularLocation>
        <location evidence="2">Cell inner membrane</location>
        <topology evidence="2">Peripheral membrane protein</topology>
        <orientation evidence="2">Cytoplasmic side</orientation>
    </subcellularLocation>
</comment>
<comment type="similarity">
    <text evidence="2">Belongs to the complex I 20 kDa subunit family.</text>
</comment>
<reference key="1">
    <citation type="journal article" date="2009" name="BMC Genomics">
        <title>Metabolic analysis of the soil microbe Dechloromonas aromatica str. RCB: indications of a surprisingly complex life-style and cryptic anaerobic pathways for aromatic degradation.</title>
        <authorList>
            <person name="Salinero K.K."/>
            <person name="Keller K."/>
            <person name="Feil W.S."/>
            <person name="Feil H."/>
            <person name="Trong S."/>
            <person name="Di Bartolo G."/>
            <person name="Lapidus A."/>
        </authorList>
    </citation>
    <scope>NUCLEOTIDE SEQUENCE [LARGE SCALE GENOMIC DNA]</scope>
    <source>
        <strain>RCB</strain>
    </source>
</reference>
<gene>
    <name evidence="2" type="primary">nuoB</name>
    <name type="ordered locus">Daro_0950</name>
</gene>
<accession>Q47HH5</accession>
<protein>
    <recommendedName>
        <fullName evidence="2">NADH-quinone oxidoreductase subunit B</fullName>
        <ecNumber evidence="2">7.1.1.-</ecNumber>
    </recommendedName>
    <alternativeName>
        <fullName evidence="2">NADH dehydrogenase I subunit B</fullName>
    </alternativeName>
    <alternativeName>
        <fullName evidence="2">NDH-1 subunit B</fullName>
    </alternativeName>
</protein>
<sequence>MAIEGVLQEGFVTTTADKLINYMRTGSLWPMTFGLACCAVEMIHAGVSRYDLDRFGVVFRPSPRQSDVMIVAGTLTNKMAPALRKVYDQMAEPRWVISMGSCANGGGYYHYSYSVVRGCDRIVPVDIYVPGCPPTAEALIYGIIQLQNKIRRTNTIAR</sequence>
<keyword id="KW-0004">4Fe-4S</keyword>
<keyword id="KW-0997">Cell inner membrane</keyword>
<keyword id="KW-1003">Cell membrane</keyword>
<keyword id="KW-0408">Iron</keyword>
<keyword id="KW-0411">Iron-sulfur</keyword>
<keyword id="KW-0472">Membrane</keyword>
<keyword id="KW-0479">Metal-binding</keyword>
<keyword id="KW-0520">NAD</keyword>
<keyword id="KW-0874">Quinone</keyword>
<keyword id="KW-1278">Translocase</keyword>
<keyword id="KW-0813">Transport</keyword>
<keyword id="KW-0830">Ubiquinone</keyword>
<organism>
    <name type="scientific">Dechloromonas aromatica (strain RCB)</name>
    <dbReference type="NCBI Taxonomy" id="159087"/>
    <lineage>
        <taxon>Bacteria</taxon>
        <taxon>Pseudomonadati</taxon>
        <taxon>Pseudomonadota</taxon>
        <taxon>Betaproteobacteria</taxon>
        <taxon>Rhodocyclales</taxon>
        <taxon>Azonexaceae</taxon>
        <taxon>Dechloromonas</taxon>
    </lineage>
</organism>
<evidence type="ECO:0000250" key="1"/>
<evidence type="ECO:0000255" key="2">
    <source>
        <dbReference type="HAMAP-Rule" id="MF_01356"/>
    </source>
</evidence>
<dbReference type="EC" id="7.1.1.-" evidence="2"/>
<dbReference type="EMBL" id="CP000089">
    <property type="protein sequence ID" value="AAZ45706.1"/>
    <property type="molecule type" value="Genomic_DNA"/>
</dbReference>
<dbReference type="SMR" id="Q47HH5"/>
<dbReference type="STRING" id="159087.Daro_0950"/>
<dbReference type="KEGG" id="dar:Daro_0950"/>
<dbReference type="eggNOG" id="COG0377">
    <property type="taxonomic scope" value="Bacteria"/>
</dbReference>
<dbReference type="HOGENOM" id="CLU_055737_7_3_4"/>
<dbReference type="OrthoDB" id="9786737at2"/>
<dbReference type="GO" id="GO:0005886">
    <property type="term" value="C:plasma membrane"/>
    <property type="evidence" value="ECO:0007669"/>
    <property type="project" value="UniProtKB-SubCell"/>
</dbReference>
<dbReference type="GO" id="GO:0045271">
    <property type="term" value="C:respiratory chain complex I"/>
    <property type="evidence" value="ECO:0007669"/>
    <property type="project" value="TreeGrafter"/>
</dbReference>
<dbReference type="GO" id="GO:0051539">
    <property type="term" value="F:4 iron, 4 sulfur cluster binding"/>
    <property type="evidence" value="ECO:0007669"/>
    <property type="project" value="UniProtKB-KW"/>
</dbReference>
<dbReference type="GO" id="GO:0005506">
    <property type="term" value="F:iron ion binding"/>
    <property type="evidence" value="ECO:0007669"/>
    <property type="project" value="UniProtKB-UniRule"/>
</dbReference>
<dbReference type="GO" id="GO:0008137">
    <property type="term" value="F:NADH dehydrogenase (ubiquinone) activity"/>
    <property type="evidence" value="ECO:0007669"/>
    <property type="project" value="InterPro"/>
</dbReference>
<dbReference type="GO" id="GO:0050136">
    <property type="term" value="F:NADH:ubiquinone reductase (non-electrogenic) activity"/>
    <property type="evidence" value="ECO:0007669"/>
    <property type="project" value="UniProtKB-UniRule"/>
</dbReference>
<dbReference type="GO" id="GO:0048038">
    <property type="term" value="F:quinone binding"/>
    <property type="evidence" value="ECO:0007669"/>
    <property type="project" value="UniProtKB-KW"/>
</dbReference>
<dbReference type="GO" id="GO:0009060">
    <property type="term" value="P:aerobic respiration"/>
    <property type="evidence" value="ECO:0007669"/>
    <property type="project" value="TreeGrafter"/>
</dbReference>
<dbReference type="GO" id="GO:0015990">
    <property type="term" value="P:electron transport coupled proton transport"/>
    <property type="evidence" value="ECO:0007669"/>
    <property type="project" value="TreeGrafter"/>
</dbReference>
<dbReference type="FunFam" id="3.40.50.12280:FF:000001">
    <property type="entry name" value="NADH-quinone oxidoreductase subunit B 2"/>
    <property type="match status" value="1"/>
</dbReference>
<dbReference type="Gene3D" id="3.40.50.12280">
    <property type="match status" value="1"/>
</dbReference>
<dbReference type="HAMAP" id="MF_01356">
    <property type="entry name" value="NDH1_NuoB"/>
    <property type="match status" value="1"/>
</dbReference>
<dbReference type="InterPro" id="IPR006137">
    <property type="entry name" value="NADH_UbQ_OxRdtase-like_20kDa"/>
</dbReference>
<dbReference type="InterPro" id="IPR006138">
    <property type="entry name" value="NADH_UQ_OxRdtase_20Kd_su"/>
</dbReference>
<dbReference type="NCBIfam" id="TIGR01957">
    <property type="entry name" value="nuoB_fam"/>
    <property type="match status" value="1"/>
</dbReference>
<dbReference type="NCBIfam" id="NF005012">
    <property type="entry name" value="PRK06411.1"/>
    <property type="match status" value="1"/>
</dbReference>
<dbReference type="PANTHER" id="PTHR11995">
    <property type="entry name" value="NADH DEHYDROGENASE"/>
    <property type="match status" value="1"/>
</dbReference>
<dbReference type="PANTHER" id="PTHR11995:SF14">
    <property type="entry name" value="NADH DEHYDROGENASE [UBIQUINONE] IRON-SULFUR PROTEIN 7, MITOCHONDRIAL"/>
    <property type="match status" value="1"/>
</dbReference>
<dbReference type="Pfam" id="PF01058">
    <property type="entry name" value="Oxidored_q6"/>
    <property type="match status" value="1"/>
</dbReference>
<dbReference type="SUPFAM" id="SSF56770">
    <property type="entry name" value="HydA/Nqo6-like"/>
    <property type="match status" value="1"/>
</dbReference>
<dbReference type="PROSITE" id="PS01150">
    <property type="entry name" value="COMPLEX1_20K"/>
    <property type="match status" value="1"/>
</dbReference>
<feature type="chain" id="PRO_0000358401" description="NADH-quinone oxidoreductase subunit B">
    <location>
        <begin position="1"/>
        <end position="158"/>
    </location>
</feature>
<feature type="binding site" evidence="2">
    <location>
        <position position="37"/>
    </location>
    <ligand>
        <name>[4Fe-4S] cluster</name>
        <dbReference type="ChEBI" id="CHEBI:49883"/>
    </ligand>
</feature>
<feature type="binding site" evidence="2">
    <location>
        <position position="38"/>
    </location>
    <ligand>
        <name>[4Fe-4S] cluster</name>
        <dbReference type="ChEBI" id="CHEBI:49883"/>
    </ligand>
</feature>
<feature type="binding site" evidence="2">
    <location>
        <position position="102"/>
    </location>
    <ligand>
        <name>[4Fe-4S] cluster</name>
        <dbReference type="ChEBI" id="CHEBI:49883"/>
    </ligand>
</feature>
<feature type="binding site" evidence="2">
    <location>
        <position position="132"/>
    </location>
    <ligand>
        <name>[4Fe-4S] cluster</name>
        <dbReference type="ChEBI" id="CHEBI:49883"/>
    </ligand>
</feature>
<proteinExistence type="inferred from homology"/>
<name>NUOB_DECAR</name>